<keyword id="KW-0131">Cell cycle</keyword>
<keyword id="KW-0132">Cell division</keyword>
<keyword id="KW-0963">Cytoplasm</keyword>
<keyword id="KW-0717">Septation</keyword>
<feature type="chain" id="PRO_0000334092" description="Cell division protein SepF">
    <location>
        <begin position="1"/>
        <end position="201"/>
    </location>
</feature>
<feature type="region of interest" description="Disordered" evidence="2">
    <location>
        <begin position="27"/>
        <end position="99"/>
    </location>
</feature>
<feature type="compositionally biased region" description="Basic and acidic residues" evidence="2">
    <location>
        <begin position="27"/>
        <end position="38"/>
    </location>
</feature>
<feature type="compositionally biased region" description="Polar residues" evidence="2">
    <location>
        <begin position="43"/>
        <end position="54"/>
    </location>
</feature>
<feature type="compositionally biased region" description="Polar residues" evidence="2">
    <location>
        <begin position="82"/>
        <end position="92"/>
    </location>
</feature>
<evidence type="ECO:0000255" key="1">
    <source>
        <dbReference type="HAMAP-Rule" id="MF_01197"/>
    </source>
</evidence>
<evidence type="ECO:0000256" key="2">
    <source>
        <dbReference type="SAM" id="MobiDB-lite"/>
    </source>
</evidence>
<sequence length="201" mass="23416">MALKDRFDKIISYFDTDDVSENEVHEVQERTSVQRDSRAATAQEASQRSHMTNSAEEEMIGSRPRTSTYNPNRQERQRVQRDNSYQQATPRIQNKDSVRQQREQVTIALKYPRKYEDAQEIVDLLIVNECVLIDFQYMLDAQARRCLDYIDGASRVLYGSLQKVGSSMFLLTPANVMVDIEEMNIPKTGQETSFDFDMKRR</sequence>
<name>SEPF_STRA3</name>
<dbReference type="EMBL" id="AL766845">
    <property type="protein sequence ID" value="CAD46172.1"/>
    <property type="molecule type" value="Genomic_DNA"/>
</dbReference>
<dbReference type="SMR" id="Q8E6N5"/>
<dbReference type="KEGG" id="san:gbs0528"/>
<dbReference type="eggNOG" id="COG1799">
    <property type="taxonomic scope" value="Bacteria"/>
</dbReference>
<dbReference type="HOGENOM" id="CLU_078499_2_0_9"/>
<dbReference type="Proteomes" id="UP000000823">
    <property type="component" value="Chromosome"/>
</dbReference>
<dbReference type="GO" id="GO:0005737">
    <property type="term" value="C:cytoplasm"/>
    <property type="evidence" value="ECO:0007669"/>
    <property type="project" value="UniProtKB-SubCell"/>
</dbReference>
<dbReference type="GO" id="GO:0000917">
    <property type="term" value="P:division septum assembly"/>
    <property type="evidence" value="ECO:0007669"/>
    <property type="project" value="UniProtKB-KW"/>
</dbReference>
<dbReference type="GO" id="GO:0043093">
    <property type="term" value="P:FtsZ-dependent cytokinesis"/>
    <property type="evidence" value="ECO:0007669"/>
    <property type="project" value="UniProtKB-UniRule"/>
</dbReference>
<dbReference type="Gene3D" id="3.30.110.150">
    <property type="entry name" value="SepF-like protein"/>
    <property type="match status" value="1"/>
</dbReference>
<dbReference type="HAMAP" id="MF_01197">
    <property type="entry name" value="SepF"/>
    <property type="match status" value="1"/>
</dbReference>
<dbReference type="InterPro" id="IPR023052">
    <property type="entry name" value="Cell_div_SepF"/>
</dbReference>
<dbReference type="InterPro" id="IPR007561">
    <property type="entry name" value="Cell_div_SepF/SepF-rel"/>
</dbReference>
<dbReference type="InterPro" id="IPR038594">
    <property type="entry name" value="SepF-like_sf"/>
</dbReference>
<dbReference type="PANTHER" id="PTHR35798">
    <property type="entry name" value="CELL DIVISION PROTEIN SEPF"/>
    <property type="match status" value="1"/>
</dbReference>
<dbReference type="PANTHER" id="PTHR35798:SF1">
    <property type="entry name" value="CELL DIVISION PROTEIN SEPF"/>
    <property type="match status" value="1"/>
</dbReference>
<dbReference type="Pfam" id="PF04472">
    <property type="entry name" value="SepF"/>
    <property type="match status" value="1"/>
</dbReference>
<organism>
    <name type="scientific">Streptococcus agalactiae serotype III (strain NEM316)</name>
    <dbReference type="NCBI Taxonomy" id="211110"/>
    <lineage>
        <taxon>Bacteria</taxon>
        <taxon>Bacillati</taxon>
        <taxon>Bacillota</taxon>
        <taxon>Bacilli</taxon>
        <taxon>Lactobacillales</taxon>
        <taxon>Streptococcaceae</taxon>
        <taxon>Streptococcus</taxon>
    </lineage>
</organism>
<proteinExistence type="inferred from homology"/>
<reference key="1">
    <citation type="journal article" date="2002" name="Mol. Microbiol.">
        <title>Genome sequence of Streptococcus agalactiae, a pathogen causing invasive neonatal disease.</title>
        <authorList>
            <person name="Glaser P."/>
            <person name="Rusniok C."/>
            <person name="Buchrieser C."/>
            <person name="Chevalier F."/>
            <person name="Frangeul L."/>
            <person name="Msadek T."/>
            <person name="Zouine M."/>
            <person name="Couve E."/>
            <person name="Lalioui L."/>
            <person name="Poyart C."/>
            <person name="Trieu-Cuot P."/>
            <person name="Kunst F."/>
        </authorList>
    </citation>
    <scope>NUCLEOTIDE SEQUENCE [LARGE SCALE GENOMIC DNA]</scope>
    <source>
        <strain>NEM316</strain>
    </source>
</reference>
<comment type="function">
    <text evidence="1">Cell division protein that is part of the divisome complex and is recruited early to the Z-ring. Probably stimulates Z-ring formation, perhaps through the cross-linking of FtsZ protofilaments. Its function overlaps with FtsA.</text>
</comment>
<comment type="subunit">
    <text evidence="1">Homodimer. Interacts with FtsZ.</text>
</comment>
<comment type="subcellular location">
    <subcellularLocation>
        <location evidence="1">Cytoplasm</location>
    </subcellularLocation>
    <text evidence="1">Localizes to the division site, in a FtsZ-dependent manner.</text>
</comment>
<comment type="similarity">
    <text evidence="1">Belongs to the SepF family.</text>
</comment>
<accession>Q8E6N5</accession>
<protein>
    <recommendedName>
        <fullName evidence="1">Cell division protein SepF</fullName>
    </recommendedName>
</protein>
<gene>
    <name evidence="1" type="primary">sepF</name>
    <name type="ordered locus">gbs0528</name>
</gene>